<name>PRW1_SCHPO</name>
<protein>
    <recommendedName>
        <fullName>RbAp48-related WD40 repeat-containing protein prw1</fullName>
    </recommendedName>
</protein>
<proteinExistence type="evidence at protein level"/>
<evidence type="ECO:0000269" key="1">
    <source>
    </source>
</evidence>
<evidence type="ECO:0000305" key="2"/>
<evidence type="ECO:0007829" key="3">
    <source>
        <dbReference type="PDB" id="8I02"/>
    </source>
</evidence>
<evidence type="ECO:0007829" key="4">
    <source>
        <dbReference type="PDB" id="8I03"/>
    </source>
</evidence>
<organism>
    <name type="scientific">Schizosaccharomyces pombe (strain 972 / ATCC 24843)</name>
    <name type="common">Fission yeast</name>
    <dbReference type="NCBI Taxonomy" id="284812"/>
    <lineage>
        <taxon>Eukaryota</taxon>
        <taxon>Fungi</taxon>
        <taxon>Dikarya</taxon>
        <taxon>Ascomycota</taxon>
        <taxon>Taphrinomycotina</taxon>
        <taxon>Schizosaccharomycetes</taxon>
        <taxon>Schizosaccharomycetales</taxon>
        <taxon>Schizosaccharomycetaceae</taxon>
        <taxon>Schizosaccharomyces</taxon>
    </lineage>
</organism>
<sequence length="431" mass="48476">MAVSAVPHPSKQAQASEEGINQEKCINEEYKIWKKNSPFLYDLIITRALEWPCMSLQWYPEQQIFAEHGYTEQKMFLGVRADVGKYLLAVASIQLPYLNQTVPPTTMEGASAGDESSLRVNISNLYSHPESVCSAKLMPQDDSCVATVGNYHNDVLVFDKESFESYSSASESPLKPKYRLTKHTQPCTSVCWNFLSKGTLVSGSQDATLSCWDLNAYNESDSASVLKVHISSHEKQVSDVRFHYKHQDLLASVSYDQYLHVHDIRRPDASTKPARSVHAHSGPIHSVAFNPHNDFILATCSTDKTIALWDLRNLNQRLHTLEGHEDIVTKISFSPHEEPILASTSADRRTLVWDLSRIGEDQPAEEAQDGPPELLFMHGGHTSCTIDMDWCPNYNWTMATAAEDNILQIWTPSRSIWGNEQLEEDATAYLS</sequence>
<accession>O14021</accession>
<gene>
    <name type="primary">prw1</name>
    <name type="ORF">SPAC29A4.18</name>
</gene>
<feature type="chain" id="PRO_0000051170" description="RbAp48-related WD40 repeat-containing protein prw1">
    <location>
        <begin position="1"/>
        <end position="431"/>
    </location>
</feature>
<feature type="repeat" description="WD 1">
    <location>
        <begin position="127"/>
        <end position="159"/>
    </location>
</feature>
<feature type="repeat" description="WD 2">
    <location>
        <begin position="182"/>
        <end position="213"/>
    </location>
</feature>
<feature type="repeat" description="WD 3">
    <location>
        <begin position="232"/>
        <end position="263"/>
    </location>
</feature>
<feature type="repeat" description="WD 4">
    <location>
        <begin position="279"/>
        <end position="310"/>
    </location>
</feature>
<feature type="repeat" description="WD 5">
    <location>
        <begin position="323"/>
        <end position="354"/>
    </location>
</feature>
<feature type="repeat" description="WD 6">
    <location>
        <begin position="380"/>
        <end position="411"/>
    </location>
</feature>
<feature type="helix" evidence="3">
    <location>
        <begin position="23"/>
        <end position="40"/>
    </location>
</feature>
<feature type="strand" evidence="3">
    <location>
        <begin position="41"/>
        <end position="47"/>
    </location>
</feature>
<feature type="strand" evidence="4">
    <location>
        <begin position="53"/>
        <end position="65"/>
    </location>
</feature>
<feature type="turn" evidence="3">
    <location>
        <begin position="66"/>
        <end position="68"/>
    </location>
</feature>
<feature type="strand" evidence="3">
    <location>
        <begin position="70"/>
        <end position="82"/>
    </location>
</feature>
<feature type="strand" evidence="3">
    <location>
        <begin position="85"/>
        <end position="96"/>
    </location>
</feature>
<feature type="strand" evidence="3">
    <location>
        <begin position="120"/>
        <end position="125"/>
    </location>
</feature>
<feature type="strand" evidence="4">
    <location>
        <begin position="133"/>
        <end position="137"/>
    </location>
</feature>
<feature type="strand" evidence="3">
    <location>
        <begin position="145"/>
        <end position="148"/>
    </location>
</feature>
<feature type="strand" evidence="3">
    <location>
        <begin position="153"/>
        <end position="158"/>
    </location>
</feature>
<feature type="helix" evidence="3">
    <location>
        <begin position="160"/>
        <end position="164"/>
    </location>
</feature>
<feature type="strand" evidence="4">
    <location>
        <begin position="170"/>
        <end position="172"/>
    </location>
</feature>
<feature type="strand" evidence="3">
    <location>
        <begin position="177"/>
        <end position="180"/>
    </location>
</feature>
<feature type="strand" evidence="3">
    <location>
        <begin position="187"/>
        <end position="192"/>
    </location>
</feature>
<feature type="strand" evidence="3">
    <location>
        <begin position="194"/>
        <end position="197"/>
    </location>
</feature>
<feature type="strand" evidence="3">
    <location>
        <begin position="200"/>
        <end position="204"/>
    </location>
</feature>
<feature type="strand" evidence="3">
    <location>
        <begin position="209"/>
        <end position="212"/>
    </location>
</feature>
<feature type="helix" evidence="4">
    <location>
        <begin position="214"/>
        <end position="216"/>
    </location>
</feature>
<feature type="turn" evidence="4">
    <location>
        <begin position="222"/>
        <end position="225"/>
    </location>
</feature>
<feature type="strand" evidence="3">
    <location>
        <begin position="226"/>
        <end position="230"/>
    </location>
</feature>
<feature type="strand" evidence="3">
    <location>
        <begin position="239"/>
        <end position="241"/>
    </location>
</feature>
<feature type="strand" evidence="3">
    <location>
        <begin position="251"/>
        <end position="253"/>
    </location>
</feature>
<feature type="strand" evidence="3">
    <location>
        <begin position="255"/>
        <end position="257"/>
    </location>
</feature>
<feature type="strand" evidence="3">
    <location>
        <begin position="259"/>
        <end position="261"/>
    </location>
</feature>
<feature type="turn" evidence="3">
    <location>
        <begin position="267"/>
        <end position="271"/>
    </location>
</feature>
<feature type="strand" evidence="3">
    <location>
        <begin position="274"/>
        <end position="277"/>
    </location>
</feature>
<feature type="strand" evidence="3">
    <location>
        <begin position="284"/>
        <end position="287"/>
    </location>
</feature>
<feature type="strand" evidence="3">
    <location>
        <begin position="294"/>
        <end position="301"/>
    </location>
</feature>
<feature type="strand" evidence="3">
    <location>
        <begin position="307"/>
        <end position="313"/>
    </location>
</feature>
<feature type="strand" evidence="3">
    <location>
        <begin position="318"/>
        <end position="320"/>
    </location>
</feature>
<feature type="strand" evidence="3">
    <location>
        <begin position="328"/>
        <end position="333"/>
    </location>
</feature>
<feature type="strand" evidence="3">
    <location>
        <begin position="341"/>
        <end position="345"/>
    </location>
</feature>
<feature type="strand" evidence="3">
    <location>
        <begin position="350"/>
        <end position="353"/>
    </location>
</feature>
<feature type="helix" evidence="3">
    <location>
        <begin position="355"/>
        <end position="357"/>
    </location>
</feature>
<feature type="turn" evidence="3">
    <location>
        <begin position="364"/>
        <end position="368"/>
    </location>
</feature>
<feature type="strand" evidence="3">
    <location>
        <begin position="372"/>
        <end position="378"/>
    </location>
</feature>
<feature type="strand" evidence="3">
    <location>
        <begin position="387"/>
        <end position="390"/>
    </location>
</feature>
<feature type="strand" evidence="3">
    <location>
        <begin position="392"/>
        <end position="394"/>
    </location>
</feature>
<feature type="strand" evidence="3">
    <location>
        <begin position="398"/>
        <end position="401"/>
    </location>
</feature>
<feature type="strand" evidence="3">
    <location>
        <begin position="403"/>
        <end position="405"/>
    </location>
</feature>
<feature type="strand" evidence="3">
    <location>
        <begin position="407"/>
        <end position="412"/>
    </location>
</feature>
<feature type="helix" evidence="3">
    <location>
        <begin position="414"/>
        <end position="417"/>
    </location>
</feature>
<comment type="function">
    <text evidence="1">Has a role in chromatin assembly and chromosome segregation. Involved in the deacetylation of histones.</text>
</comment>
<comment type="subunit">
    <text evidence="1">Heterotetramer of alp13, clr6, prw1 and pst2.</text>
</comment>
<comment type="interaction">
    <interactant intactId="EBI-904698">
        <id>O14021</id>
    </interactant>
    <interactant intactId="EBI-904686">
        <id>O13919</id>
        <label>pst2</label>
    </interactant>
    <organismsDiffer>false</organismsDiffer>
    <experiments>3</experiments>
</comment>
<comment type="subcellular location">
    <subcellularLocation>
        <location evidence="1">Nucleus</location>
    </subcellularLocation>
</comment>
<comment type="similarity">
    <text evidence="2">Belongs to the WD repeat HIR1 family.</text>
</comment>
<dbReference type="EMBL" id="CU329670">
    <property type="protein sequence ID" value="CAB10144.1"/>
    <property type="molecule type" value="Genomic_DNA"/>
</dbReference>
<dbReference type="PIR" id="T38471">
    <property type="entry name" value="T38471"/>
</dbReference>
<dbReference type="RefSeq" id="NP_594864.1">
    <property type="nucleotide sequence ID" value="NM_001020293.2"/>
</dbReference>
<dbReference type="PDB" id="8I02">
    <property type="method" value="EM"/>
    <property type="resolution" value="2.90 A"/>
    <property type="chains" value="C=1-431"/>
</dbReference>
<dbReference type="PDB" id="8I03">
    <property type="method" value="EM"/>
    <property type="resolution" value="3.20 A"/>
    <property type="chains" value="J/K=1-431"/>
</dbReference>
<dbReference type="PDB" id="8IFG">
    <property type="method" value="EM"/>
    <property type="resolution" value="3.20 A"/>
    <property type="chains" value="B=1-431"/>
</dbReference>
<dbReference type="PDBsum" id="8I02"/>
<dbReference type="PDBsum" id="8I03"/>
<dbReference type="PDBsum" id="8IFG"/>
<dbReference type="EMDB" id="EMD-35092"/>
<dbReference type="EMDB" id="EMD-35093"/>
<dbReference type="EMDB" id="EMD-35416"/>
<dbReference type="SMR" id="O14021"/>
<dbReference type="BioGRID" id="278295">
    <property type="interactions" value="405"/>
</dbReference>
<dbReference type="ComplexPortal" id="CPX-9124">
    <property type="entry name" value="RPD3S histone deacetylase complex"/>
</dbReference>
<dbReference type="ComplexPortal" id="CPX-9129">
    <property type="entry name" value="RPD3L histone deacetylase complex"/>
</dbReference>
<dbReference type="DIP" id="DIP-29342N"/>
<dbReference type="FunCoup" id="O14021">
    <property type="interactions" value="71"/>
</dbReference>
<dbReference type="IntAct" id="O14021">
    <property type="interactions" value="8"/>
</dbReference>
<dbReference type="STRING" id="284812.O14021"/>
<dbReference type="iPTMnet" id="O14021"/>
<dbReference type="PaxDb" id="4896-SPAC29A4.18.1"/>
<dbReference type="EnsemblFungi" id="SPAC29A4.18.1">
    <property type="protein sequence ID" value="SPAC29A4.18.1:pep"/>
    <property type="gene ID" value="SPAC29A4.18"/>
</dbReference>
<dbReference type="GeneID" id="2541804"/>
<dbReference type="KEGG" id="spo:2541804"/>
<dbReference type="PomBase" id="SPAC29A4.18">
    <property type="gene designation" value="prw1"/>
</dbReference>
<dbReference type="VEuPathDB" id="FungiDB:SPAC29A4.18"/>
<dbReference type="eggNOG" id="KOG0264">
    <property type="taxonomic scope" value="Eukaryota"/>
</dbReference>
<dbReference type="HOGENOM" id="CLU_020445_3_1_1"/>
<dbReference type="InParanoid" id="O14021"/>
<dbReference type="OMA" id="RALEWPC"/>
<dbReference type="PhylomeDB" id="O14021"/>
<dbReference type="Reactome" id="R-SPO-3214815">
    <property type="pathway name" value="HDACs deacetylate histones"/>
</dbReference>
<dbReference type="PRO" id="PR:O14021"/>
<dbReference type="Proteomes" id="UP000002485">
    <property type="component" value="Chromosome I"/>
</dbReference>
<dbReference type="GO" id="GO:0005737">
    <property type="term" value="C:cytoplasm"/>
    <property type="evidence" value="ECO:0000318"/>
    <property type="project" value="GO_Central"/>
</dbReference>
<dbReference type="GO" id="GO:0005829">
    <property type="term" value="C:cytosol"/>
    <property type="evidence" value="ECO:0007005"/>
    <property type="project" value="PomBase"/>
</dbReference>
<dbReference type="GO" id="GO:0005634">
    <property type="term" value="C:nucleus"/>
    <property type="evidence" value="ECO:0000314"/>
    <property type="project" value="PomBase"/>
</dbReference>
<dbReference type="GO" id="GO:0033698">
    <property type="term" value="C:Rpd3L complex"/>
    <property type="evidence" value="ECO:0000314"/>
    <property type="project" value="PomBase"/>
</dbReference>
<dbReference type="GO" id="GO:0070210">
    <property type="term" value="C:Rpd3L-Expanded complex"/>
    <property type="evidence" value="ECO:0000314"/>
    <property type="project" value="PomBase"/>
</dbReference>
<dbReference type="GO" id="GO:0032221">
    <property type="term" value="C:Rpd3S complex"/>
    <property type="evidence" value="ECO:0000314"/>
    <property type="project" value="PomBase"/>
</dbReference>
<dbReference type="GO" id="GO:0000510">
    <property type="term" value="F:H3-H4 histone complex chaperone activity"/>
    <property type="evidence" value="ECO:0000304"/>
    <property type="project" value="PomBase"/>
</dbReference>
<dbReference type="GO" id="GO:0042393">
    <property type="term" value="F:histone binding"/>
    <property type="evidence" value="ECO:0000318"/>
    <property type="project" value="GO_Central"/>
</dbReference>
<dbReference type="GO" id="GO:0006338">
    <property type="term" value="P:chromatin remodeling"/>
    <property type="evidence" value="ECO:0000318"/>
    <property type="project" value="GO_Central"/>
</dbReference>
<dbReference type="GO" id="GO:0006355">
    <property type="term" value="P:regulation of DNA-templated transcription"/>
    <property type="evidence" value="ECO:0000318"/>
    <property type="project" value="GO_Central"/>
</dbReference>
<dbReference type="GO" id="GO:0045815">
    <property type="term" value="P:transcription initiation-coupled chromatin remodeling"/>
    <property type="evidence" value="ECO:0000305"/>
    <property type="project" value="PomBase"/>
</dbReference>
<dbReference type="Gene3D" id="2.130.10.10">
    <property type="entry name" value="YVTN repeat-like/Quinoprotein amine dehydrogenase"/>
    <property type="match status" value="1"/>
</dbReference>
<dbReference type="InterPro" id="IPR020472">
    <property type="entry name" value="G-protein_beta_WD-40_rep"/>
</dbReference>
<dbReference type="InterPro" id="IPR022052">
    <property type="entry name" value="Histone-bd_RBBP4-like_N"/>
</dbReference>
<dbReference type="InterPro" id="IPR015943">
    <property type="entry name" value="WD40/YVTN_repeat-like_dom_sf"/>
</dbReference>
<dbReference type="InterPro" id="IPR019775">
    <property type="entry name" value="WD40_repeat_CS"/>
</dbReference>
<dbReference type="InterPro" id="IPR036322">
    <property type="entry name" value="WD40_repeat_dom_sf"/>
</dbReference>
<dbReference type="InterPro" id="IPR001680">
    <property type="entry name" value="WD40_rpt"/>
</dbReference>
<dbReference type="InterPro" id="IPR050459">
    <property type="entry name" value="WD_repeat_RBAP46/RBAP48/MSI1"/>
</dbReference>
<dbReference type="PANTHER" id="PTHR22850">
    <property type="entry name" value="WD40 REPEAT FAMILY"/>
    <property type="match status" value="1"/>
</dbReference>
<dbReference type="Pfam" id="PF12265">
    <property type="entry name" value="CAF1C_H4-bd"/>
    <property type="match status" value="1"/>
</dbReference>
<dbReference type="Pfam" id="PF00400">
    <property type="entry name" value="WD40"/>
    <property type="match status" value="4"/>
</dbReference>
<dbReference type="PRINTS" id="PR00320">
    <property type="entry name" value="GPROTEINBRPT"/>
</dbReference>
<dbReference type="SMART" id="SM00320">
    <property type="entry name" value="WD40"/>
    <property type="match status" value="6"/>
</dbReference>
<dbReference type="SUPFAM" id="SSF50978">
    <property type="entry name" value="WD40 repeat-like"/>
    <property type="match status" value="1"/>
</dbReference>
<dbReference type="PROSITE" id="PS00678">
    <property type="entry name" value="WD_REPEATS_1"/>
    <property type="match status" value="2"/>
</dbReference>
<dbReference type="PROSITE" id="PS50082">
    <property type="entry name" value="WD_REPEATS_2"/>
    <property type="match status" value="3"/>
</dbReference>
<dbReference type="PROSITE" id="PS50294">
    <property type="entry name" value="WD_REPEATS_REGION"/>
    <property type="match status" value="1"/>
</dbReference>
<keyword id="KW-0002">3D-structure</keyword>
<keyword id="KW-0156">Chromatin regulator</keyword>
<keyword id="KW-0903">Direct protein sequencing</keyword>
<keyword id="KW-0539">Nucleus</keyword>
<keyword id="KW-1185">Reference proteome</keyword>
<keyword id="KW-0677">Repeat</keyword>
<keyword id="KW-0804">Transcription</keyword>
<keyword id="KW-0805">Transcription regulation</keyword>
<keyword id="KW-0853">WD repeat</keyword>
<reference key="1">
    <citation type="journal article" date="2002" name="Nature">
        <title>The genome sequence of Schizosaccharomyces pombe.</title>
        <authorList>
            <person name="Wood V."/>
            <person name="Gwilliam R."/>
            <person name="Rajandream M.A."/>
            <person name="Lyne M.H."/>
            <person name="Lyne R."/>
            <person name="Stewart A."/>
            <person name="Sgouros J.G."/>
            <person name="Peat N."/>
            <person name="Hayles J."/>
            <person name="Baker S.G."/>
            <person name="Basham D."/>
            <person name="Bowman S."/>
            <person name="Brooks K."/>
            <person name="Brown D."/>
            <person name="Brown S."/>
            <person name="Chillingworth T."/>
            <person name="Churcher C.M."/>
            <person name="Collins M."/>
            <person name="Connor R."/>
            <person name="Cronin A."/>
            <person name="Davis P."/>
            <person name="Feltwell T."/>
            <person name="Fraser A."/>
            <person name="Gentles S."/>
            <person name="Goble A."/>
            <person name="Hamlin N."/>
            <person name="Harris D.E."/>
            <person name="Hidalgo J."/>
            <person name="Hodgson G."/>
            <person name="Holroyd S."/>
            <person name="Hornsby T."/>
            <person name="Howarth S."/>
            <person name="Huckle E.J."/>
            <person name="Hunt S."/>
            <person name="Jagels K."/>
            <person name="James K.D."/>
            <person name="Jones L."/>
            <person name="Jones M."/>
            <person name="Leather S."/>
            <person name="McDonald S."/>
            <person name="McLean J."/>
            <person name="Mooney P."/>
            <person name="Moule S."/>
            <person name="Mungall K.L."/>
            <person name="Murphy L.D."/>
            <person name="Niblett D."/>
            <person name="Odell C."/>
            <person name="Oliver K."/>
            <person name="O'Neil S."/>
            <person name="Pearson D."/>
            <person name="Quail M.A."/>
            <person name="Rabbinowitsch E."/>
            <person name="Rutherford K.M."/>
            <person name="Rutter S."/>
            <person name="Saunders D."/>
            <person name="Seeger K."/>
            <person name="Sharp S."/>
            <person name="Skelton J."/>
            <person name="Simmonds M.N."/>
            <person name="Squares R."/>
            <person name="Squares S."/>
            <person name="Stevens K."/>
            <person name="Taylor K."/>
            <person name="Taylor R.G."/>
            <person name="Tivey A."/>
            <person name="Walsh S.V."/>
            <person name="Warren T."/>
            <person name="Whitehead S."/>
            <person name="Woodward J.R."/>
            <person name="Volckaert G."/>
            <person name="Aert R."/>
            <person name="Robben J."/>
            <person name="Grymonprez B."/>
            <person name="Weltjens I."/>
            <person name="Vanstreels E."/>
            <person name="Rieger M."/>
            <person name="Schaefer M."/>
            <person name="Mueller-Auer S."/>
            <person name="Gabel C."/>
            <person name="Fuchs M."/>
            <person name="Duesterhoeft A."/>
            <person name="Fritzc C."/>
            <person name="Holzer E."/>
            <person name="Moestl D."/>
            <person name="Hilbert H."/>
            <person name="Borzym K."/>
            <person name="Langer I."/>
            <person name="Beck A."/>
            <person name="Lehrach H."/>
            <person name="Reinhardt R."/>
            <person name="Pohl T.M."/>
            <person name="Eger P."/>
            <person name="Zimmermann W."/>
            <person name="Wedler H."/>
            <person name="Wambutt R."/>
            <person name="Purnelle B."/>
            <person name="Goffeau A."/>
            <person name="Cadieu E."/>
            <person name="Dreano S."/>
            <person name="Gloux S."/>
            <person name="Lelaure V."/>
            <person name="Mottier S."/>
            <person name="Galibert F."/>
            <person name="Aves S.J."/>
            <person name="Xiang Z."/>
            <person name="Hunt C."/>
            <person name="Moore K."/>
            <person name="Hurst S.M."/>
            <person name="Lucas M."/>
            <person name="Rochet M."/>
            <person name="Gaillardin C."/>
            <person name="Tallada V.A."/>
            <person name="Garzon A."/>
            <person name="Thode G."/>
            <person name="Daga R.R."/>
            <person name="Cruzado L."/>
            <person name="Jimenez J."/>
            <person name="Sanchez M."/>
            <person name="del Rey F."/>
            <person name="Benito J."/>
            <person name="Dominguez A."/>
            <person name="Revuelta J.L."/>
            <person name="Moreno S."/>
            <person name="Armstrong J."/>
            <person name="Forsburg S.L."/>
            <person name="Cerutti L."/>
            <person name="Lowe T."/>
            <person name="McCombie W.R."/>
            <person name="Paulsen I."/>
            <person name="Potashkin J."/>
            <person name="Shpakovski G.V."/>
            <person name="Ussery D."/>
            <person name="Barrell B.G."/>
            <person name="Nurse P."/>
        </authorList>
    </citation>
    <scope>NUCLEOTIDE SEQUENCE [LARGE SCALE GENOMIC DNA]</scope>
    <source>
        <strain>972 / ATCC 24843</strain>
    </source>
</reference>
<reference key="2">
    <citation type="journal article" date="2003" name="EMBO J.">
        <title>Alp13, an MRG family protein, is a component of fission yeast Clr6 histone deacetylase required for genomic integrity.</title>
        <authorList>
            <person name="Nakayama J."/>
            <person name="Xiao G."/>
            <person name="Noma K."/>
            <person name="Malikzay A."/>
            <person name="Bjerling P."/>
            <person name="Ekwall K."/>
            <person name="Kobayashi R."/>
            <person name="Grewal S.I.S."/>
        </authorList>
    </citation>
    <scope>PROTEIN SEQUENCE OF 12-24; 36-47 AND 318-349</scope>
    <scope>IDENTIFICATION</scope>
    <scope>FUNCTION</scope>
    <scope>SUBUNIT</scope>
    <scope>SUBCELLULAR LOCATION</scope>
</reference>